<protein>
    <recommendedName>
        <fullName evidence="1">Small ribosomal subunit protein uS19c</fullName>
    </recommendedName>
    <alternativeName>
        <fullName evidence="2">30S ribosomal protein S19, chloroplastic</fullName>
    </alternativeName>
</protein>
<comment type="function">
    <text evidence="1">Protein S19 forms a complex with S13 that binds strongly to the 16S ribosomal RNA.</text>
</comment>
<comment type="subcellular location">
    <subcellularLocation>
        <location>Plastid</location>
        <location>Chloroplast</location>
    </subcellularLocation>
</comment>
<comment type="similarity">
    <text evidence="1">Belongs to the universal ribosomal protein uS19 family.</text>
</comment>
<evidence type="ECO:0000255" key="1">
    <source>
        <dbReference type="HAMAP-Rule" id="MF_00531"/>
    </source>
</evidence>
<evidence type="ECO:0000305" key="2"/>
<geneLocation type="chloroplast"/>
<keyword id="KW-0150">Chloroplast</keyword>
<keyword id="KW-0934">Plastid</keyword>
<keyword id="KW-0687">Ribonucleoprotein</keyword>
<keyword id="KW-0689">Ribosomal protein</keyword>
<keyword id="KW-0694">RNA-binding</keyword>
<keyword id="KW-0699">rRNA-binding</keyword>
<reference key="1">
    <citation type="journal article" date="2005" name="BMC Biol.">
        <title>The complete chloroplast DNA sequences of the charophycean green algae Staurastrum and Zygnema reveal that the chloroplast genome underwent extensive changes during the evolution of the Zygnematales.</title>
        <authorList>
            <person name="Turmel M."/>
            <person name="Otis C."/>
            <person name="Lemieux C."/>
        </authorList>
    </citation>
    <scope>NUCLEOTIDE SEQUENCE [LARGE SCALE GENOMIC DNA]</scope>
</reference>
<dbReference type="EMBL" id="AY958086">
    <property type="protein sequence ID" value="AAX45871.1"/>
    <property type="molecule type" value="Genomic_DNA"/>
</dbReference>
<dbReference type="RefSeq" id="YP_636489.1">
    <property type="nucleotide sequence ID" value="NC_008117.1"/>
</dbReference>
<dbReference type="SMR" id="Q32RN7"/>
<dbReference type="GeneID" id="4108191"/>
<dbReference type="GO" id="GO:0009507">
    <property type="term" value="C:chloroplast"/>
    <property type="evidence" value="ECO:0007669"/>
    <property type="project" value="UniProtKB-SubCell"/>
</dbReference>
<dbReference type="GO" id="GO:0005763">
    <property type="term" value="C:mitochondrial small ribosomal subunit"/>
    <property type="evidence" value="ECO:0007669"/>
    <property type="project" value="TreeGrafter"/>
</dbReference>
<dbReference type="GO" id="GO:0019843">
    <property type="term" value="F:rRNA binding"/>
    <property type="evidence" value="ECO:0007669"/>
    <property type="project" value="UniProtKB-UniRule"/>
</dbReference>
<dbReference type="GO" id="GO:0003735">
    <property type="term" value="F:structural constituent of ribosome"/>
    <property type="evidence" value="ECO:0007669"/>
    <property type="project" value="InterPro"/>
</dbReference>
<dbReference type="GO" id="GO:0000028">
    <property type="term" value="P:ribosomal small subunit assembly"/>
    <property type="evidence" value="ECO:0007669"/>
    <property type="project" value="TreeGrafter"/>
</dbReference>
<dbReference type="GO" id="GO:0006412">
    <property type="term" value="P:translation"/>
    <property type="evidence" value="ECO:0007669"/>
    <property type="project" value="UniProtKB-UniRule"/>
</dbReference>
<dbReference type="FunFam" id="3.30.860.10:FF:000001">
    <property type="entry name" value="30S ribosomal protein S19"/>
    <property type="match status" value="1"/>
</dbReference>
<dbReference type="Gene3D" id="3.30.860.10">
    <property type="entry name" value="30s Ribosomal Protein S19, Chain A"/>
    <property type="match status" value="1"/>
</dbReference>
<dbReference type="HAMAP" id="MF_00531">
    <property type="entry name" value="Ribosomal_uS19"/>
    <property type="match status" value="1"/>
</dbReference>
<dbReference type="InterPro" id="IPR002222">
    <property type="entry name" value="Ribosomal_uS19"/>
</dbReference>
<dbReference type="InterPro" id="IPR005732">
    <property type="entry name" value="Ribosomal_uS19_bac-type"/>
</dbReference>
<dbReference type="InterPro" id="IPR023575">
    <property type="entry name" value="Ribosomal_uS19_SF"/>
</dbReference>
<dbReference type="NCBIfam" id="TIGR01050">
    <property type="entry name" value="rpsS_bact"/>
    <property type="match status" value="1"/>
</dbReference>
<dbReference type="PANTHER" id="PTHR11880">
    <property type="entry name" value="RIBOSOMAL PROTEIN S19P FAMILY MEMBER"/>
    <property type="match status" value="1"/>
</dbReference>
<dbReference type="PANTHER" id="PTHR11880:SF8">
    <property type="entry name" value="SMALL RIBOSOMAL SUBUNIT PROTEIN US19M"/>
    <property type="match status" value="1"/>
</dbReference>
<dbReference type="Pfam" id="PF00203">
    <property type="entry name" value="Ribosomal_S19"/>
    <property type="match status" value="1"/>
</dbReference>
<dbReference type="PIRSF" id="PIRSF002144">
    <property type="entry name" value="Ribosomal_S19"/>
    <property type="match status" value="1"/>
</dbReference>
<dbReference type="PRINTS" id="PR00975">
    <property type="entry name" value="RIBOSOMALS19"/>
</dbReference>
<dbReference type="SUPFAM" id="SSF54570">
    <property type="entry name" value="Ribosomal protein S19"/>
    <property type="match status" value="1"/>
</dbReference>
<sequence length="93" mass="10700">MTRSLKKGPFVADHLLNKIENLNAKEEKKVIITWSRASTIVPAMIGHTIAVHNGREHLPVFITELMIRHKLGEFASTRTFRSHLKKSDKKSRR</sequence>
<name>RR19_ZYGCR</name>
<organism>
    <name type="scientific">Zygnema circumcarinatum</name>
    <name type="common">Green alga</name>
    <dbReference type="NCBI Taxonomy" id="35869"/>
    <lineage>
        <taxon>Eukaryota</taxon>
        <taxon>Viridiplantae</taxon>
        <taxon>Streptophyta</taxon>
        <taxon>Zygnematophyceae</taxon>
        <taxon>Zygnematophycidae</taxon>
        <taxon>Zygnematales</taxon>
        <taxon>Zygnemataceae</taxon>
        <taxon>Zygnema</taxon>
    </lineage>
</organism>
<feature type="chain" id="PRO_0000276930" description="Small ribosomal subunit protein uS19c">
    <location>
        <begin position="1"/>
        <end position="93"/>
    </location>
</feature>
<gene>
    <name evidence="1" type="primary">rps19</name>
</gene>
<accession>Q32RN7</accession>
<proteinExistence type="inferred from homology"/>